<accession>B8B4K9</accession>
<feature type="chain" id="PRO_0000423693" description="Nucleosome assembly protein 1-like 4">
    <location>
        <begin position="1"/>
        <end position="312"/>
    </location>
</feature>
<feature type="region of interest" description="Disordered" evidence="3">
    <location>
        <begin position="288"/>
        <end position="312"/>
    </location>
</feature>
<feature type="coiled-coil region" evidence="2">
    <location>
        <begin position="24"/>
        <end position="78"/>
    </location>
</feature>
<feature type="short sequence motif" description="Nuclear export signal" evidence="2">
    <location>
        <begin position="45"/>
        <end position="60"/>
    </location>
</feature>
<dbReference type="EMBL" id="CM000131">
    <property type="protein sequence ID" value="EEC80965.1"/>
    <property type="status" value="ALT_SEQ"/>
    <property type="molecule type" value="Genomic_DNA"/>
</dbReference>
<dbReference type="SMR" id="B8B4K9"/>
<dbReference type="STRING" id="39946.B8B4K9"/>
<dbReference type="HOGENOM" id="CLU_038841_4_2_1"/>
<dbReference type="Proteomes" id="UP000007015">
    <property type="component" value="Chromosome 6"/>
</dbReference>
<dbReference type="GO" id="GO:0005737">
    <property type="term" value="C:cytoplasm"/>
    <property type="evidence" value="ECO:0007669"/>
    <property type="project" value="UniProtKB-SubCell"/>
</dbReference>
<dbReference type="GO" id="GO:0005634">
    <property type="term" value="C:nucleus"/>
    <property type="evidence" value="ECO:0007669"/>
    <property type="project" value="UniProtKB-SubCell"/>
</dbReference>
<dbReference type="GO" id="GO:0042393">
    <property type="term" value="F:histone binding"/>
    <property type="evidence" value="ECO:0007669"/>
    <property type="project" value="UniProtKB-ARBA"/>
</dbReference>
<dbReference type="GO" id="GO:0000724">
    <property type="term" value="P:double-strand break repair via homologous recombination"/>
    <property type="evidence" value="ECO:0007669"/>
    <property type="project" value="UniProtKB-ARBA"/>
</dbReference>
<dbReference type="GO" id="GO:0006334">
    <property type="term" value="P:nucleosome assembly"/>
    <property type="evidence" value="ECO:0007669"/>
    <property type="project" value="InterPro"/>
</dbReference>
<dbReference type="FunFam" id="1.20.5.1500:FF:000001">
    <property type="entry name" value="Nucleosome assembly protein 1-like 1"/>
    <property type="match status" value="1"/>
</dbReference>
<dbReference type="FunFam" id="3.30.1120.90:FF:000005">
    <property type="entry name" value="Nucleosome assembly protein11"/>
    <property type="match status" value="1"/>
</dbReference>
<dbReference type="Gene3D" id="1.20.5.1500">
    <property type="match status" value="1"/>
</dbReference>
<dbReference type="Gene3D" id="3.30.1120.90">
    <property type="entry name" value="Nucleosome assembly protein"/>
    <property type="match status" value="1"/>
</dbReference>
<dbReference type="InterPro" id="IPR037231">
    <property type="entry name" value="NAP-like_sf"/>
</dbReference>
<dbReference type="InterPro" id="IPR002164">
    <property type="entry name" value="NAP_family"/>
</dbReference>
<dbReference type="PANTHER" id="PTHR11875">
    <property type="entry name" value="TESTIS-SPECIFIC Y-ENCODED PROTEIN"/>
    <property type="match status" value="1"/>
</dbReference>
<dbReference type="Pfam" id="PF00956">
    <property type="entry name" value="NAP"/>
    <property type="match status" value="1"/>
</dbReference>
<dbReference type="SUPFAM" id="SSF143113">
    <property type="entry name" value="NAP-like"/>
    <property type="match status" value="1"/>
</dbReference>
<proteinExistence type="inferred from homology"/>
<reference key="1">
    <citation type="journal article" date="2005" name="PLoS Biol.">
        <title>The genomes of Oryza sativa: a history of duplications.</title>
        <authorList>
            <person name="Yu J."/>
            <person name="Wang J."/>
            <person name="Lin W."/>
            <person name="Li S."/>
            <person name="Li H."/>
            <person name="Zhou J."/>
            <person name="Ni P."/>
            <person name="Dong W."/>
            <person name="Hu S."/>
            <person name="Zeng C."/>
            <person name="Zhang J."/>
            <person name="Zhang Y."/>
            <person name="Li R."/>
            <person name="Xu Z."/>
            <person name="Li S."/>
            <person name="Li X."/>
            <person name="Zheng H."/>
            <person name="Cong L."/>
            <person name="Lin L."/>
            <person name="Yin J."/>
            <person name="Geng J."/>
            <person name="Li G."/>
            <person name="Shi J."/>
            <person name="Liu J."/>
            <person name="Lv H."/>
            <person name="Li J."/>
            <person name="Wang J."/>
            <person name="Deng Y."/>
            <person name="Ran L."/>
            <person name="Shi X."/>
            <person name="Wang X."/>
            <person name="Wu Q."/>
            <person name="Li C."/>
            <person name="Ren X."/>
            <person name="Wang J."/>
            <person name="Wang X."/>
            <person name="Li D."/>
            <person name="Liu D."/>
            <person name="Zhang X."/>
            <person name="Ji Z."/>
            <person name="Zhao W."/>
            <person name="Sun Y."/>
            <person name="Zhang Z."/>
            <person name="Bao J."/>
            <person name="Han Y."/>
            <person name="Dong L."/>
            <person name="Ji J."/>
            <person name="Chen P."/>
            <person name="Wu S."/>
            <person name="Liu J."/>
            <person name="Xiao Y."/>
            <person name="Bu D."/>
            <person name="Tan J."/>
            <person name="Yang L."/>
            <person name="Ye C."/>
            <person name="Zhang J."/>
            <person name="Xu J."/>
            <person name="Zhou Y."/>
            <person name="Yu Y."/>
            <person name="Zhang B."/>
            <person name="Zhuang S."/>
            <person name="Wei H."/>
            <person name="Liu B."/>
            <person name="Lei M."/>
            <person name="Yu H."/>
            <person name="Li Y."/>
            <person name="Xu H."/>
            <person name="Wei S."/>
            <person name="He X."/>
            <person name="Fang L."/>
            <person name="Zhang Z."/>
            <person name="Zhang Y."/>
            <person name="Huang X."/>
            <person name="Su Z."/>
            <person name="Tong W."/>
            <person name="Li J."/>
            <person name="Tong Z."/>
            <person name="Li S."/>
            <person name="Ye J."/>
            <person name="Wang L."/>
            <person name="Fang L."/>
            <person name="Lei T."/>
            <person name="Chen C.-S."/>
            <person name="Chen H.-C."/>
            <person name="Xu Z."/>
            <person name="Li H."/>
            <person name="Huang H."/>
            <person name="Zhang F."/>
            <person name="Xu H."/>
            <person name="Li N."/>
            <person name="Zhao C."/>
            <person name="Li S."/>
            <person name="Dong L."/>
            <person name="Huang Y."/>
            <person name="Li L."/>
            <person name="Xi Y."/>
            <person name="Qi Q."/>
            <person name="Li W."/>
            <person name="Zhang B."/>
            <person name="Hu W."/>
            <person name="Zhang Y."/>
            <person name="Tian X."/>
            <person name="Jiao Y."/>
            <person name="Liang X."/>
            <person name="Jin J."/>
            <person name="Gao L."/>
            <person name="Zheng W."/>
            <person name="Hao B."/>
            <person name="Liu S.-M."/>
            <person name="Wang W."/>
            <person name="Yuan L."/>
            <person name="Cao M."/>
            <person name="McDermott J."/>
            <person name="Samudrala R."/>
            <person name="Wang J."/>
            <person name="Wong G.K.-S."/>
            <person name="Yang H."/>
        </authorList>
    </citation>
    <scope>NUCLEOTIDE SEQUENCE [LARGE SCALE GENOMIC DNA]</scope>
    <source>
        <strain>cv. 93-11</strain>
    </source>
</reference>
<gene>
    <name type="ORF">OsI_23686</name>
</gene>
<comment type="function">
    <text evidence="1">May modulate chromatin structure by regulation of nucleosome assembly/disassembly.</text>
</comment>
<comment type="subcellular location">
    <subcellularLocation>
        <location evidence="1">Nucleus</location>
    </subcellularLocation>
    <subcellularLocation>
        <location evidence="1">Cytoplasm</location>
    </subcellularLocation>
</comment>
<comment type="domain">
    <text>The acidic domain is probably involved in the interaction with histones.</text>
</comment>
<comment type="similarity">
    <text evidence="4">Belongs to the nucleosome assembly protein (NAP) family.</text>
</comment>
<comment type="sequence caution" evidence="4">
    <conflict type="erroneous gene model prediction">
        <sequence resource="EMBL-CDS" id="EEC80965"/>
    </conflict>
</comment>
<comment type="sequence caution" evidence="4">
    <conflict type="frameshift">
        <sequence resource="EMBL-CDS" id="EEC80965"/>
    </conflict>
</comment>
<organism>
    <name type="scientific">Oryza sativa subsp. indica</name>
    <name type="common">Rice</name>
    <dbReference type="NCBI Taxonomy" id="39946"/>
    <lineage>
        <taxon>Eukaryota</taxon>
        <taxon>Viridiplantae</taxon>
        <taxon>Streptophyta</taxon>
        <taxon>Embryophyta</taxon>
        <taxon>Tracheophyta</taxon>
        <taxon>Spermatophyta</taxon>
        <taxon>Magnoliopsida</taxon>
        <taxon>Liliopsida</taxon>
        <taxon>Poales</taxon>
        <taxon>Poaceae</taxon>
        <taxon>BOP clade</taxon>
        <taxon>Oryzoideae</taxon>
        <taxon>Oryzeae</taxon>
        <taxon>Oryzinae</taxon>
        <taxon>Oryza</taxon>
        <taxon>Oryza sativa</taxon>
    </lineage>
</organism>
<protein>
    <recommendedName>
        <fullName>Nucleosome assembly protein 1-like 4</fullName>
    </recommendedName>
</protein>
<sequence length="312" mass="36323">MNEEVEDGEVKPLELSSEDKAILVETLKNKLQALAEQHVDVLESLAPSVRKRVDVLMEIQSQHDELEVKFFEEKAALEAKYQKLYGPLYSKRSKIVSGVLEVEGETEEREEKGVPDFWLNAMKNNEILAEEIHESDEEALKYLKDIKWCRIDDPKGFKFEFFFYTNPFFKNQVLTKTYHMIDEDDEPILEKAIGTEIEWHPGYCLTQEVLTKESSESTKPITKTEECESFFNFFSPPQVPDDDAKIDENTAEELQNQMERDYDIASTLRDKIIPHAVSWFTREAVQDEDYGASWVDDEEEDDNDDEYSDEEA</sequence>
<name>NAF1D_ORYSI</name>
<evidence type="ECO:0000250" key="1"/>
<evidence type="ECO:0000255" key="2"/>
<evidence type="ECO:0000256" key="3">
    <source>
        <dbReference type="SAM" id="MobiDB-lite"/>
    </source>
</evidence>
<evidence type="ECO:0000305" key="4"/>
<keyword id="KW-0143">Chaperone</keyword>
<keyword id="KW-0175">Coiled coil</keyword>
<keyword id="KW-0963">Cytoplasm</keyword>
<keyword id="KW-0539">Nucleus</keyword>
<keyword id="KW-1185">Reference proteome</keyword>